<evidence type="ECO:0000250" key="1"/>
<evidence type="ECO:0000255" key="2">
    <source>
        <dbReference type="HAMAP-Rule" id="MF_01320"/>
    </source>
</evidence>
<evidence type="ECO:0000256" key="3">
    <source>
        <dbReference type="SAM" id="MobiDB-lite"/>
    </source>
</evidence>
<evidence type="ECO:0000305" key="4"/>
<gene>
    <name type="primary">rpl2-A</name>
</gene>
<gene>
    <name type="primary">rpl2-B</name>
</gene>
<protein>
    <recommendedName>
        <fullName evidence="2">Large ribosomal subunit protein uL2cz/uL2cy</fullName>
    </recommendedName>
    <alternativeName>
        <fullName evidence="4">50S ribosomal protein L2, chloroplastic</fullName>
    </alternativeName>
</protein>
<comment type="subunit">
    <text evidence="1">Part of the 50S ribosomal subunit.</text>
</comment>
<comment type="subcellular location">
    <subcellularLocation>
        <location>Plastid</location>
        <location>Chloroplast</location>
    </subcellularLocation>
</comment>
<comment type="similarity">
    <text evidence="4">Belongs to the universal ribosomal protein uL2 family.</text>
</comment>
<organism>
    <name type="scientific">Phaseolus vulgaris</name>
    <name type="common">Kidney bean</name>
    <name type="synonym">French bean</name>
    <dbReference type="NCBI Taxonomy" id="3885"/>
    <lineage>
        <taxon>Eukaryota</taxon>
        <taxon>Viridiplantae</taxon>
        <taxon>Streptophyta</taxon>
        <taxon>Embryophyta</taxon>
        <taxon>Tracheophyta</taxon>
        <taxon>Spermatophyta</taxon>
        <taxon>Magnoliopsida</taxon>
        <taxon>eudicotyledons</taxon>
        <taxon>Gunneridae</taxon>
        <taxon>Pentapetalae</taxon>
        <taxon>rosids</taxon>
        <taxon>fabids</taxon>
        <taxon>Fabales</taxon>
        <taxon>Fabaceae</taxon>
        <taxon>Papilionoideae</taxon>
        <taxon>50 kb inversion clade</taxon>
        <taxon>NPAAA clade</taxon>
        <taxon>indigoferoid/millettioid clade</taxon>
        <taxon>Phaseoleae</taxon>
        <taxon>Phaseolus</taxon>
    </lineage>
</organism>
<proteinExistence type="inferred from homology"/>
<accession>A4GGF8</accession>
<accession>A8W835</accession>
<dbReference type="EMBL" id="DQ886273">
    <property type="protein sequence ID" value="ABH88140.1"/>
    <property type="molecule type" value="Genomic_DNA"/>
</dbReference>
<dbReference type="EMBL" id="DQ886273">
    <property type="protein sequence ID" value="ABP35956.1"/>
    <property type="molecule type" value="Genomic_DNA"/>
</dbReference>
<dbReference type="EMBL" id="EU196765">
    <property type="protein sequence ID" value="ABW22805.1"/>
    <property type="molecule type" value="Genomic_DNA"/>
</dbReference>
<dbReference type="EMBL" id="EU196765">
    <property type="protein sequence ID" value="ABW22826.1"/>
    <property type="molecule type" value="Genomic_DNA"/>
</dbReference>
<dbReference type="SMR" id="A4GGF8"/>
<dbReference type="KEGG" id="pvu:4961815"/>
<dbReference type="KEGG" id="pvu:5075301"/>
<dbReference type="eggNOG" id="KOG0438">
    <property type="taxonomic scope" value="Eukaryota"/>
</dbReference>
<dbReference type="GO" id="GO:0009507">
    <property type="term" value="C:chloroplast"/>
    <property type="evidence" value="ECO:0007669"/>
    <property type="project" value="UniProtKB-SubCell"/>
</dbReference>
<dbReference type="GO" id="GO:0005762">
    <property type="term" value="C:mitochondrial large ribosomal subunit"/>
    <property type="evidence" value="ECO:0007669"/>
    <property type="project" value="TreeGrafter"/>
</dbReference>
<dbReference type="GO" id="GO:0019843">
    <property type="term" value="F:rRNA binding"/>
    <property type="evidence" value="ECO:0007669"/>
    <property type="project" value="UniProtKB-UniRule"/>
</dbReference>
<dbReference type="GO" id="GO:0003735">
    <property type="term" value="F:structural constituent of ribosome"/>
    <property type="evidence" value="ECO:0007669"/>
    <property type="project" value="InterPro"/>
</dbReference>
<dbReference type="GO" id="GO:0016740">
    <property type="term" value="F:transferase activity"/>
    <property type="evidence" value="ECO:0007669"/>
    <property type="project" value="InterPro"/>
</dbReference>
<dbReference type="GO" id="GO:0032543">
    <property type="term" value="P:mitochondrial translation"/>
    <property type="evidence" value="ECO:0007669"/>
    <property type="project" value="TreeGrafter"/>
</dbReference>
<dbReference type="FunFam" id="4.10.950.10:FF:000001">
    <property type="entry name" value="50S ribosomal protein L2"/>
    <property type="match status" value="1"/>
</dbReference>
<dbReference type="FunFam" id="2.30.30.30:FF:000008">
    <property type="entry name" value="50S ribosomal protein L2, chloroplastic"/>
    <property type="match status" value="1"/>
</dbReference>
<dbReference type="FunFam" id="2.40.50.140:FF:000029">
    <property type="entry name" value="50S ribosomal protein L2, chloroplastic"/>
    <property type="match status" value="1"/>
</dbReference>
<dbReference type="Gene3D" id="2.30.30.30">
    <property type="match status" value="1"/>
</dbReference>
<dbReference type="Gene3D" id="2.40.50.140">
    <property type="entry name" value="Nucleic acid-binding proteins"/>
    <property type="match status" value="1"/>
</dbReference>
<dbReference type="Gene3D" id="4.10.950.10">
    <property type="entry name" value="Ribosomal protein L2, domain 3"/>
    <property type="match status" value="1"/>
</dbReference>
<dbReference type="HAMAP" id="MF_01320_B">
    <property type="entry name" value="Ribosomal_uL2_B"/>
    <property type="match status" value="1"/>
</dbReference>
<dbReference type="InterPro" id="IPR012340">
    <property type="entry name" value="NA-bd_OB-fold"/>
</dbReference>
<dbReference type="InterPro" id="IPR014722">
    <property type="entry name" value="Rib_uL2_dom2"/>
</dbReference>
<dbReference type="InterPro" id="IPR002171">
    <property type="entry name" value="Ribosomal_uL2"/>
</dbReference>
<dbReference type="InterPro" id="IPR005880">
    <property type="entry name" value="Ribosomal_uL2_bac/org-type"/>
</dbReference>
<dbReference type="InterPro" id="IPR022669">
    <property type="entry name" value="Ribosomal_uL2_C"/>
</dbReference>
<dbReference type="InterPro" id="IPR022671">
    <property type="entry name" value="Ribosomal_uL2_CS"/>
</dbReference>
<dbReference type="InterPro" id="IPR014726">
    <property type="entry name" value="Ribosomal_uL2_dom3"/>
</dbReference>
<dbReference type="InterPro" id="IPR022666">
    <property type="entry name" value="Ribosomal_uL2_RNA-bd_dom"/>
</dbReference>
<dbReference type="InterPro" id="IPR008991">
    <property type="entry name" value="Translation_prot_SH3-like_sf"/>
</dbReference>
<dbReference type="NCBIfam" id="TIGR01171">
    <property type="entry name" value="rplB_bact"/>
    <property type="match status" value="1"/>
</dbReference>
<dbReference type="PANTHER" id="PTHR13691:SF5">
    <property type="entry name" value="LARGE RIBOSOMAL SUBUNIT PROTEIN UL2M"/>
    <property type="match status" value="1"/>
</dbReference>
<dbReference type="PANTHER" id="PTHR13691">
    <property type="entry name" value="RIBOSOMAL PROTEIN L2"/>
    <property type="match status" value="1"/>
</dbReference>
<dbReference type="Pfam" id="PF00181">
    <property type="entry name" value="Ribosomal_L2"/>
    <property type="match status" value="1"/>
</dbReference>
<dbReference type="Pfam" id="PF03947">
    <property type="entry name" value="Ribosomal_L2_C"/>
    <property type="match status" value="1"/>
</dbReference>
<dbReference type="PIRSF" id="PIRSF002158">
    <property type="entry name" value="Ribosomal_L2"/>
    <property type="match status" value="1"/>
</dbReference>
<dbReference type="SMART" id="SM01383">
    <property type="entry name" value="Ribosomal_L2"/>
    <property type="match status" value="1"/>
</dbReference>
<dbReference type="SMART" id="SM01382">
    <property type="entry name" value="Ribosomal_L2_C"/>
    <property type="match status" value="1"/>
</dbReference>
<dbReference type="SUPFAM" id="SSF50249">
    <property type="entry name" value="Nucleic acid-binding proteins"/>
    <property type="match status" value="1"/>
</dbReference>
<dbReference type="SUPFAM" id="SSF50104">
    <property type="entry name" value="Translation proteins SH3-like domain"/>
    <property type="match status" value="1"/>
</dbReference>
<dbReference type="PROSITE" id="PS00467">
    <property type="entry name" value="RIBOSOMAL_L2"/>
    <property type="match status" value="1"/>
</dbReference>
<feature type="chain" id="PRO_0000310085" description="Large ribosomal subunit protein uL2cz/uL2cy">
    <location>
        <begin position="1"/>
        <end position="274"/>
    </location>
</feature>
<feature type="region of interest" description="Disordered" evidence="3">
    <location>
        <begin position="1"/>
        <end position="22"/>
    </location>
</feature>
<feature type="region of interest" description="Disordered" evidence="3">
    <location>
        <begin position="223"/>
        <end position="274"/>
    </location>
</feature>
<name>RK2_PHAVU</name>
<sequence>MAIHLYKTSTPSTRNGAVDSQVKSNPRNHLIYGQHRCGKGRNARGIITAGHRGGGHKRLYRQIDFRRNEKNIYGRIVTIEYDPNRNASICLIHYGDGEKKYILHPRGAIIGDTIVSGTEVPIKMGNALPLTDMPLGTAIHNIEITLGKGGQLARAAGAVAKLIAKEGKSATLKLPSGEVRLISKNCSATVGQVGNVGVNQKNLGRAGSKCWLGKRPIVRGVVMNPVDHPHGGGEGRAPIGRKKPATPWGFPALGRRSRKRKKYSDNLILRRRTK</sequence>
<keyword id="KW-0150">Chloroplast</keyword>
<keyword id="KW-0934">Plastid</keyword>
<keyword id="KW-0687">Ribonucleoprotein</keyword>
<keyword id="KW-0689">Ribosomal protein</keyword>
<reference key="1">
    <citation type="journal article" date="2007" name="BMC Genomics">
        <title>Rapid evolutionary change of common bean (Phaseolus vulgaris L) plastome, and the genomic diversification of legume chloroplasts.</title>
        <authorList>
            <person name="Guo X."/>
            <person name="Castillo-Ramirez S."/>
            <person name="Gonzalez V."/>
            <person name="Bustos P."/>
            <person name="Fernandez-Vazquez J.L."/>
            <person name="Santamaria R.I."/>
            <person name="Arellano J."/>
            <person name="Cevallos M.A."/>
            <person name="Davila G."/>
        </authorList>
    </citation>
    <scope>NUCLEOTIDE SEQUENCE [LARGE SCALE GENOMIC DNA]</scope>
    <source>
        <strain>cv. Negro Jamapa</strain>
    </source>
</reference>
<reference key="2">
    <citation type="submission" date="2007-10" db="EMBL/GenBank/DDBJ databases">
        <title>Complete nucleotide sequence of the plastid genome of the common bean, Phaseolus vulgaris.</title>
        <authorList>
            <person name="Moore M.J."/>
            <person name="Triplett E.W."/>
            <person name="Broughton W.J."/>
            <person name="Soltis P.S."/>
            <person name="Soltis D.E."/>
        </authorList>
    </citation>
    <scope>NUCLEOTIDE SEQUENCE [LARGE SCALE GENOMIC DNA]</scope>
</reference>
<geneLocation type="chloroplast"/>